<gene>
    <name evidence="1" type="primary">ligA</name>
    <name type="ordered locus">Abu_1067</name>
</gene>
<protein>
    <recommendedName>
        <fullName evidence="1">DNA ligase</fullName>
        <ecNumber evidence="1">6.5.1.2</ecNumber>
    </recommendedName>
    <alternativeName>
        <fullName evidence="1">Polydeoxyribonucleotide synthase [NAD(+)]</fullName>
    </alternativeName>
</protein>
<evidence type="ECO:0000255" key="1">
    <source>
        <dbReference type="HAMAP-Rule" id="MF_01588"/>
    </source>
</evidence>
<dbReference type="EC" id="6.5.1.2" evidence="1"/>
<dbReference type="EMBL" id="CP000361">
    <property type="protein sequence ID" value="ABV67327.1"/>
    <property type="molecule type" value="Genomic_DNA"/>
</dbReference>
<dbReference type="RefSeq" id="WP_012012771.1">
    <property type="nucleotide sequence ID" value="NC_009850.1"/>
</dbReference>
<dbReference type="SMR" id="A8ETQ3"/>
<dbReference type="STRING" id="367737.Abu_1067"/>
<dbReference type="GeneID" id="24305432"/>
<dbReference type="KEGG" id="abu:Abu_1067"/>
<dbReference type="eggNOG" id="COG0272">
    <property type="taxonomic scope" value="Bacteria"/>
</dbReference>
<dbReference type="HOGENOM" id="CLU_007764_2_1_7"/>
<dbReference type="Proteomes" id="UP000001136">
    <property type="component" value="Chromosome"/>
</dbReference>
<dbReference type="GO" id="GO:0005829">
    <property type="term" value="C:cytosol"/>
    <property type="evidence" value="ECO:0007669"/>
    <property type="project" value="TreeGrafter"/>
</dbReference>
<dbReference type="GO" id="GO:0003677">
    <property type="term" value="F:DNA binding"/>
    <property type="evidence" value="ECO:0007669"/>
    <property type="project" value="InterPro"/>
</dbReference>
<dbReference type="GO" id="GO:0003911">
    <property type="term" value="F:DNA ligase (NAD+) activity"/>
    <property type="evidence" value="ECO:0007669"/>
    <property type="project" value="UniProtKB-UniRule"/>
</dbReference>
<dbReference type="GO" id="GO:0046872">
    <property type="term" value="F:metal ion binding"/>
    <property type="evidence" value="ECO:0007669"/>
    <property type="project" value="UniProtKB-KW"/>
</dbReference>
<dbReference type="GO" id="GO:0006281">
    <property type="term" value="P:DNA repair"/>
    <property type="evidence" value="ECO:0007669"/>
    <property type="project" value="UniProtKB-KW"/>
</dbReference>
<dbReference type="GO" id="GO:0006260">
    <property type="term" value="P:DNA replication"/>
    <property type="evidence" value="ECO:0007669"/>
    <property type="project" value="UniProtKB-KW"/>
</dbReference>
<dbReference type="CDD" id="cd17748">
    <property type="entry name" value="BRCT_DNA_ligase_like"/>
    <property type="match status" value="1"/>
</dbReference>
<dbReference type="CDD" id="cd00114">
    <property type="entry name" value="LIGANc"/>
    <property type="match status" value="1"/>
</dbReference>
<dbReference type="FunFam" id="1.10.150.20:FF:000007">
    <property type="entry name" value="DNA ligase"/>
    <property type="match status" value="1"/>
</dbReference>
<dbReference type="FunFam" id="2.40.50.140:FF:000012">
    <property type="entry name" value="DNA ligase"/>
    <property type="match status" value="1"/>
</dbReference>
<dbReference type="Gene3D" id="1.10.150.20">
    <property type="entry name" value="5' to 3' exonuclease, C-terminal subdomain"/>
    <property type="match status" value="2"/>
</dbReference>
<dbReference type="Gene3D" id="3.40.50.10190">
    <property type="entry name" value="BRCT domain"/>
    <property type="match status" value="1"/>
</dbReference>
<dbReference type="Gene3D" id="3.30.470.30">
    <property type="entry name" value="DNA ligase/mRNA capping enzyme"/>
    <property type="match status" value="1"/>
</dbReference>
<dbReference type="Gene3D" id="1.10.287.610">
    <property type="entry name" value="Helix hairpin bin"/>
    <property type="match status" value="1"/>
</dbReference>
<dbReference type="Gene3D" id="2.40.50.140">
    <property type="entry name" value="Nucleic acid-binding proteins"/>
    <property type="match status" value="1"/>
</dbReference>
<dbReference type="HAMAP" id="MF_01588">
    <property type="entry name" value="DNA_ligase_A"/>
    <property type="match status" value="1"/>
</dbReference>
<dbReference type="InterPro" id="IPR001357">
    <property type="entry name" value="BRCT_dom"/>
</dbReference>
<dbReference type="InterPro" id="IPR036420">
    <property type="entry name" value="BRCT_dom_sf"/>
</dbReference>
<dbReference type="InterPro" id="IPR041663">
    <property type="entry name" value="DisA/LigA_HHH"/>
</dbReference>
<dbReference type="InterPro" id="IPR001679">
    <property type="entry name" value="DNA_ligase"/>
</dbReference>
<dbReference type="InterPro" id="IPR018239">
    <property type="entry name" value="DNA_ligase_AS"/>
</dbReference>
<dbReference type="InterPro" id="IPR013839">
    <property type="entry name" value="DNAligase_adenylation"/>
</dbReference>
<dbReference type="InterPro" id="IPR013840">
    <property type="entry name" value="DNAligase_N"/>
</dbReference>
<dbReference type="InterPro" id="IPR003583">
    <property type="entry name" value="Hlx-hairpin-Hlx_DNA-bd_motif"/>
</dbReference>
<dbReference type="InterPro" id="IPR012340">
    <property type="entry name" value="NA-bd_OB-fold"/>
</dbReference>
<dbReference type="InterPro" id="IPR004150">
    <property type="entry name" value="NAD_DNA_ligase_OB"/>
</dbReference>
<dbReference type="InterPro" id="IPR010994">
    <property type="entry name" value="RuvA_2-like"/>
</dbReference>
<dbReference type="NCBIfam" id="TIGR00575">
    <property type="entry name" value="dnlj"/>
    <property type="match status" value="1"/>
</dbReference>
<dbReference type="NCBIfam" id="NF005932">
    <property type="entry name" value="PRK07956.1"/>
    <property type="match status" value="1"/>
</dbReference>
<dbReference type="PANTHER" id="PTHR23389">
    <property type="entry name" value="CHROMOSOME TRANSMISSION FIDELITY FACTOR 18"/>
    <property type="match status" value="1"/>
</dbReference>
<dbReference type="PANTHER" id="PTHR23389:SF9">
    <property type="entry name" value="DNA LIGASE"/>
    <property type="match status" value="1"/>
</dbReference>
<dbReference type="Pfam" id="PF00533">
    <property type="entry name" value="BRCT"/>
    <property type="match status" value="1"/>
</dbReference>
<dbReference type="Pfam" id="PF01653">
    <property type="entry name" value="DNA_ligase_aden"/>
    <property type="match status" value="1"/>
</dbReference>
<dbReference type="Pfam" id="PF03120">
    <property type="entry name" value="DNA_ligase_OB"/>
    <property type="match status" value="1"/>
</dbReference>
<dbReference type="Pfam" id="PF12826">
    <property type="entry name" value="HHH_2"/>
    <property type="match status" value="1"/>
</dbReference>
<dbReference type="PIRSF" id="PIRSF001604">
    <property type="entry name" value="LigA"/>
    <property type="match status" value="1"/>
</dbReference>
<dbReference type="SMART" id="SM00292">
    <property type="entry name" value="BRCT"/>
    <property type="match status" value="1"/>
</dbReference>
<dbReference type="SMART" id="SM00278">
    <property type="entry name" value="HhH1"/>
    <property type="match status" value="3"/>
</dbReference>
<dbReference type="SMART" id="SM00532">
    <property type="entry name" value="LIGANc"/>
    <property type="match status" value="1"/>
</dbReference>
<dbReference type="SUPFAM" id="SSF52113">
    <property type="entry name" value="BRCT domain"/>
    <property type="match status" value="1"/>
</dbReference>
<dbReference type="SUPFAM" id="SSF56091">
    <property type="entry name" value="DNA ligase/mRNA capping enzyme, catalytic domain"/>
    <property type="match status" value="1"/>
</dbReference>
<dbReference type="SUPFAM" id="SSF50249">
    <property type="entry name" value="Nucleic acid-binding proteins"/>
    <property type="match status" value="1"/>
</dbReference>
<dbReference type="SUPFAM" id="SSF47781">
    <property type="entry name" value="RuvA domain 2-like"/>
    <property type="match status" value="1"/>
</dbReference>
<dbReference type="PROSITE" id="PS50172">
    <property type="entry name" value="BRCT"/>
    <property type="match status" value="1"/>
</dbReference>
<dbReference type="PROSITE" id="PS01055">
    <property type="entry name" value="DNA_LIGASE_N1"/>
    <property type="match status" value="1"/>
</dbReference>
<organism>
    <name type="scientific">Aliarcobacter butzleri (strain RM4018)</name>
    <name type="common">Arcobacter butzleri</name>
    <dbReference type="NCBI Taxonomy" id="367737"/>
    <lineage>
        <taxon>Bacteria</taxon>
        <taxon>Pseudomonadati</taxon>
        <taxon>Campylobacterota</taxon>
        <taxon>Epsilonproteobacteria</taxon>
        <taxon>Campylobacterales</taxon>
        <taxon>Arcobacteraceae</taxon>
        <taxon>Aliarcobacter</taxon>
    </lineage>
</organism>
<reference key="1">
    <citation type="journal article" date="2007" name="PLoS ONE">
        <title>The complete genome sequence and analysis of the Epsilonproteobacterium Arcobacter butzleri.</title>
        <authorList>
            <person name="Miller W.G."/>
            <person name="Parker C.T."/>
            <person name="Rubenfield M."/>
            <person name="Mendz G.L."/>
            <person name="Woesten M.M.S.M."/>
            <person name="Ussery D.W."/>
            <person name="Stolz J.F."/>
            <person name="Binnewies T.T."/>
            <person name="Hallin P.F."/>
            <person name="Wang G."/>
            <person name="Malek J.A."/>
            <person name="Rogosin A."/>
            <person name="Stanker L.H."/>
            <person name="Mandrell R.E."/>
        </authorList>
    </citation>
    <scope>NUCLEOTIDE SEQUENCE [LARGE SCALE GENOMIC DNA]</scope>
    <source>
        <strain>RM4018</strain>
    </source>
</reference>
<proteinExistence type="inferred from homology"/>
<keyword id="KW-0227">DNA damage</keyword>
<keyword id="KW-0234">DNA repair</keyword>
<keyword id="KW-0235">DNA replication</keyword>
<keyword id="KW-0436">Ligase</keyword>
<keyword id="KW-0460">Magnesium</keyword>
<keyword id="KW-0464">Manganese</keyword>
<keyword id="KW-0479">Metal-binding</keyword>
<keyword id="KW-0520">NAD</keyword>
<keyword id="KW-1185">Reference proteome</keyword>
<keyword id="KW-0862">Zinc</keyword>
<comment type="function">
    <text evidence="1">DNA ligase that catalyzes the formation of phosphodiester linkages between 5'-phosphoryl and 3'-hydroxyl groups in double-stranded DNA using NAD as a coenzyme and as the energy source for the reaction. It is essential for DNA replication and repair of damaged DNA.</text>
</comment>
<comment type="catalytic activity">
    <reaction evidence="1">
        <text>NAD(+) + (deoxyribonucleotide)n-3'-hydroxyl + 5'-phospho-(deoxyribonucleotide)m = (deoxyribonucleotide)n+m + AMP + beta-nicotinamide D-nucleotide.</text>
        <dbReference type="EC" id="6.5.1.2"/>
    </reaction>
</comment>
<comment type="cofactor">
    <cofactor evidence="1">
        <name>Mg(2+)</name>
        <dbReference type="ChEBI" id="CHEBI:18420"/>
    </cofactor>
    <cofactor evidence="1">
        <name>Mn(2+)</name>
        <dbReference type="ChEBI" id="CHEBI:29035"/>
    </cofactor>
</comment>
<comment type="similarity">
    <text evidence="1">Belongs to the NAD-dependent DNA ligase family. LigA subfamily.</text>
</comment>
<feature type="chain" id="PRO_0000313115" description="DNA ligase">
    <location>
        <begin position="1"/>
        <end position="648"/>
    </location>
</feature>
<feature type="domain" description="BRCT" evidence="1">
    <location>
        <begin position="573"/>
        <end position="648"/>
    </location>
</feature>
<feature type="active site" description="N6-AMP-lysine intermediate" evidence="1">
    <location>
        <position position="110"/>
    </location>
</feature>
<feature type="binding site" evidence="1">
    <location>
        <begin position="30"/>
        <end position="34"/>
    </location>
    <ligand>
        <name>NAD(+)</name>
        <dbReference type="ChEBI" id="CHEBI:57540"/>
    </ligand>
</feature>
<feature type="binding site" evidence="1">
    <location>
        <begin position="79"/>
        <end position="80"/>
    </location>
    <ligand>
        <name>NAD(+)</name>
        <dbReference type="ChEBI" id="CHEBI:57540"/>
    </ligand>
</feature>
<feature type="binding site" evidence="1">
    <location>
        <position position="131"/>
    </location>
    <ligand>
        <name>NAD(+)</name>
        <dbReference type="ChEBI" id="CHEBI:57540"/>
    </ligand>
</feature>
<feature type="binding site" evidence="1">
    <location>
        <position position="165"/>
    </location>
    <ligand>
        <name>NAD(+)</name>
        <dbReference type="ChEBI" id="CHEBI:57540"/>
    </ligand>
</feature>
<feature type="binding site" evidence="1">
    <location>
        <position position="280"/>
    </location>
    <ligand>
        <name>NAD(+)</name>
        <dbReference type="ChEBI" id="CHEBI:57540"/>
    </ligand>
</feature>
<feature type="binding site" evidence="1">
    <location>
        <position position="304"/>
    </location>
    <ligand>
        <name>NAD(+)</name>
        <dbReference type="ChEBI" id="CHEBI:57540"/>
    </ligand>
</feature>
<feature type="binding site" evidence="1">
    <location>
        <position position="398"/>
    </location>
    <ligand>
        <name>Zn(2+)</name>
        <dbReference type="ChEBI" id="CHEBI:29105"/>
    </ligand>
</feature>
<feature type="binding site" evidence="1">
    <location>
        <position position="401"/>
    </location>
    <ligand>
        <name>Zn(2+)</name>
        <dbReference type="ChEBI" id="CHEBI:29105"/>
    </ligand>
</feature>
<feature type="binding site" evidence="1">
    <location>
        <position position="414"/>
    </location>
    <ligand>
        <name>Zn(2+)</name>
        <dbReference type="ChEBI" id="CHEBI:29105"/>
    </ligand>
</feature>
<feature type="binding site" evidence="1">
    <location>
        <position position="419"/>
    </location>
    <ligand>
        <name>Zn(2+)</name>
        <dbReference type="ChEBI" id="CHEBI:29105"/>
    </ligand>
</feature>
<sequence>MTKEEYDLNIEKLISWANAYYVFDNPIATDEEYDKLARLCLAYEQENPKLSHPNSPNKRVGGIVLDGFIKASHLSRMWSQEDVFNTQELEDWIKRASKVNTNLEFFCQPKFDGASLNLIYENGILKQAITRGDGTVGEDVTNNAKTIFSIPLEIEEKSLIEIRGEVVIKKADFEKINIERAKNGEQLFANPRNAAAGSLRQLDSNITAKRKLFFNVWGIGQNSLEHKKYSQIMEYIYSLGFERPQMQTLASNIEEIESLYHKFISIRNDFEMMLDGMVIKIDDIETQEELGYTVKFPRWSCAYKFPAVEKTTKLKAITLQVGRTGIITPVAEVEPTLIDGSTVSRATLHNFDEIERLDLKINDEVIIIKSGDIIPKITKVFFERRKGDEITISRPTSCPTCNSEVLDEGTMIKCQNLDCPSRVVNSIIYFASKNCMNIDGLGNKIVEQLFNEKKIYDILDIYSLKYEDLQDLEGFKEKKINNLLNAIENTKGSELHRVINALGIEHIGEVASKQICLEFGLDVINKDYDSLIALDGFGEQMANSFIEFMRVNKNLVEKLISIINPKVEIKKEVSENPFKNKTVVITGTMSKSRGEIKSMLEDLGAKVSSSVSKKTDYVIFGEDAGSKYDKAIELGVKLLTEEEMNSLF</sequence>
<accession>A8ETQ3</accession>
<name>DNLJ_ALIB4</name>